<feature type="initiator methionine" description="Removed" evidence="1">
    <location>
        <position position="1"/>
    </location>
</feature>
<feature type="chain" id="PRO_1000008737" description="Formamidopyrimidine-DNA glycosylase">
    <location>
        <begin position="2"/>
        <end position="293"/>
    </location>
</feature>
<feature type="zinc finger region" description="FPG-type" evidence="2">
    <location>
        <begin position="259"/>
        <end position="293"/>
    </location>
</feature>
<feature type="active site" description="Schiff-base intermediate with DNA" evidence="2">
    <location>
        <position position="2"/>
    </location>
</feature>
<feature type="active site" description="Proton donor" evidence="2">
    <location>
        <position position="3"/>
    </location>
</feature>
<feature type="active site" description="Proton donor; for beta-elimination activity" evidence="2">
    <location>
        <position position="60"/>
    </location>
</feature>
<feature type="active site" description="Proton donor; for delta-elimination activity" evidence="2">
    <location>
        <position position="283"/>
    </location>
</feature>
<feature type="binding site" evidence="2">
    <location>
        <position position="110"/>
    </location>
    <ligand>
        <name>DNA</name>
        <dbReference type="ChEBI" id="CHEBI:16991"/>
    </ligand>
</feature>
<feature type="binding site" evidence="2">
    <location>
        <position position="129"/>
    </location>
    <ligand>
        <name>DNA</name>
        <dbReference type="ChEBI" id="CHEBI:16991"/>
    </ligand>
</feature>
<feature type="binding site" evidence="2">
    <location>
        <position position="174"/>
    </location>
    <ligand>
        <name>DNA</name>
        <dbReference type="ChEBI" id="CHEBI:16991"/>
    </ligand>
</feature>
<evidence type="ECO:0000250" key="1"/>
<evidence type="ECO:0000255" key="2">
    <source>
        <dbReference type="HAMAP-Rule" id="MF_00103"/>
    </source>
</evidence>
<protein>
    <recommendedName>
        <fullName evidence="2">Formamidopyrimidine-DNA glycosylase</fullName>
        <shortName evidence="2">Fapy-DNA glycosylase</shortName>
        <ecNumber evidence="2">3.2.2.23</ecNumber>
    </recommendedName>
    <alternativeName>
        <fullName evidence="2">DNA-(apurinic or apyrimidinic site) lyase MutM</fullName>
        <shortName evidence="2">AP lyase MutM</shortName>
        <ecNumber evidence="2">4.2.99.18</ecNumber>
    </alternativeName>
</protein>
<reference key="1">
    <citation type="journal article" date="2007" name="PLoS Genet.">
        <title>Patterns and implications of gene gain and loss in the evolution of Prochlorococcus.</title>
        <authorList>
            <person name="Kettler G.C."/>
            <person name="Martiny A.C."/>
            <person name="Huang K."/>
            <person name="Zucker J."/>
            <person name="Coleman M.L."/>
            <person name="Rodrigue S."/>
            <person name="Chen F."/>
            <person name="Lapidus A."/>
            <person name="Ferriera S."/>
            <person name="Johnson J."/>
            <person name="Steglich C."/>
            <person name="Church G.M."/>
            <person name="Richardson P."/>
            <person name="Chisholm S.W."/>
        </authorList>
    </citation>
    <scope>NUCLEOTIDE SEQUENCE [LARGE SCALE GENOMIC DNA]</scope>
    <source>
        <strain>MIT 9515</strain>
    </source>
</reference>
<name>FPG_PROM5</name>
<keyword id="KW-0227">DNA damage</keyword>
<keyword id="KW-0234">DNA repair</keyword>
<keyword id="KW-0238">DNA-binding</keyword>
<keyword id="KW-0326">Glycosidase</keyword>
<keyword id="KW-0378">Hydrolase</keyword>
<keyword id="KW-0456">Lyase</keyword>
<keyword id="KW-0479">Metal-binding</keyword>
<keyword id="KW-0511">Multifunctional enzyme</keyword>
<keyword id="KW-0862">Zinc</keyword>
<keyword id="KW-0863">Zinc-finger</keyword>
<gene>
    <name evidence="2" type="primary">mutM</name>
    <name evidence="2" type="synonym">fpg</name>
    <name type="ordered locus">P9515_03601</name>
</gene>
<sequence length="293" mass="33739">MPELPEVETVRKGLEQKLKNFIIKRVEICRESTVAYPIDKQDFVKGLQNSLINKWDRRGKYLIAKLKKADRNHTYIENEMSLKNNGSLVVHLRMTGYFTFNKNPTSPCKHTRIRLFDNNNNELRYIDVRSFGQMWWVREGLSPKNIIKGLGALGPEPFSEKFNISYLTKIILNKTRSIKSILLDQTIVAGIGNIYADESLYSAGISPFREARTIEKHELIKLRIAIIEVLKKSIGAGGTTFSDFRDLEGENGNFGLQTNVYRRTGKKCHACKNLIERQKISGRSTHWCRKCQK</sequence>
<organism>
    <name type="scientific">Prochlorococcus marinus (strain MIT 9515)</name>
    <dbReference type="NCBI Taxonomy" id="167542"/>
    <lineage>
        <taxon>Bacteria</taxon>
        <taxon>Bacillati</taxon>
        <taxon>Cyanobacteriota</taxon>
        <taxon>Cyanophyceae</taxon>
        <taxon>Synechococcales</taxon>
        <taxon>Prochlorococcaceae</taxon>
        <taxon>Prochlorococcus</taxon>
    </lineage>
</organism>
<accession>A2BUV8</accession>
<proteinExistence type="inferred from homology"/>
<comment type="function">
    <text evidence="2">Involved in base excision repair of DNA damaged by oxidation or by mutagenic agents. Acts as a DNA glycosylase that recognizes and removes damaged bases. Has a preference for oxidized purines, such as 7,8-dihydro-8-oxoguanine (8-oxoG). Has AP (apurinic/apyrimidinic) lyase activity and introduces nicks in the DNA strand. Cleaves the DNA backbone by beta-delta elimination to generate a single-strand break at the site of the removed base with both 3'- and 5'-phosphates.</text>
</comment>
<comment type="catalytic activity">
    <reaction evidence="2">
        <text>Hydrolysis of DNA containing ring-opened 7-methylguanine residues, releasing 2,6-diamino-4-hydroxy-5-(N-methyl)formamidopyrimidine.</text>
        <dbReference type="EC" id="3.2.2.23"/>
    </reaction>
</comment>
<comment type="catalytic activity">
    <reaction evidence="2">
        <text>2'-deoxyribonucleotide-(2'-deoxyribose 5'-phosphate)-2'-deoxyribonucleotide-DNA = a 3'-end 2'-deoxyribonucleotide-(2,3-dehydro-2,3-deoxyribose 5'-phosphate)-DNA + a 5'-end 5'-phospho-2'-deoxyribonucleoside-DNA + H(+)</text>
        <dbReference type="Rhea" id="RHEA:66592"/>
        <dbReference type="Rhea" id="RHEA-COMP:13180"/>
        <dbReference type="Rhea" id="RHEA-COMP:16897"/>
        <dbReference type="Rhea" id="RHEA-COMP:17067"/>
        <dbReference type="ChEBI" id="CHEBI:15378"/>
        <dbReference type="ChEBI" id="CHEBI:136412"/>
        <dbReference type="ChEBI" id="CHEBI:157695"/>
        <dbReference type="ChEBI" id="CHEBI:167181"/>
        <dbReference type="EC" id="4.2.99.18"/>
    </reaction>
</comment>
<comment type="cofactor">
    <cofactor evidence="2">
        <name>Zn(2+)</name>
        <dbReference type="ChEBI" id="CHEBI:29105"/>
    </cofactor>
    <text evidence="2">Binds 1 zinc ion per subunit.</text>
</comment>
<comment type="subunit">
    <text evidence="2">Monomer.</text>
</comment>
<comment type="similarity">
    <text evidence="2">Belongs to the FPG family.</text>
</comment>
<dbReference type="EC" id="3.2.2.23" evidence="2"/>
<dbReference type="EC" id="4.2.99.18" evidence="2"/>
<dbReference type="EMBL" id="CP000552">
    <property type="protein sequence ID" value="ABM71569.1"/>
    <property type="molecule type" value="Genomic_DNA"/>
</dbReference>
<dbReference type="RefSeq" id="WP_011819677.1">
    <property type="nucleotide sequence ID" value="NC_008817.1"/>
</dbReference>
<dbReference type="SMR" id="A2BUV8"/>
<dbReference type="STRING" id="167542.P9515_03601"/>
<dbReference type="GeneID" id="60200410"/>
<dbReference type="KEGG" id="pmc:P9515_03601"/>
<dbReference type="eggNOG" id="COG0266">
    <property type="taxonomic scope" value="Bacteria"/>
</dbReference>
<dbReference type="HOGENOM" id="CLU_038423_1_2_3"/>
<dbReference type="OrthoDB" id="9800855at2"/>
<dbReference type="Proteomes" id="UP000001589">
    <property type="component" value="Chromosome"/>
</dbReference>
<dbReference type="GO" id="GO:0034039">
    <property type="term" value="F:8-oxo-7,8-dihydroguanine DNA N-glycosylase activity"/>
    <property type="evidence" value="ECO:0007669"/>
    <property type="project" value="TreeGrafter"/>
</dbReference>
<dbReference type="GO" id="GO:0140078">
    <property type="term" value="F:class I DNA-(apurinic or apyrimidinic site) endonuclease activity"/>
    <property type="evidence" value="ECO:0007669"/>
    <property type="project" value="UniProtKB-EC"/>
</dbReference>
<dbReference type="GO" id="GO:0003684">
    <property type="term" value="F:damaged DNA binding"/>
    <property type="evidence" value="ECO:0007669"/>
    <property type="project" value="InterPro"/>
</dbReference>
<dbReference type="GO" id="GO:0008270">
    <property type="term" value="F:zinc ion binding"/>
    <property type="evidence" value="ECO:0007669"/>
    <property type="project" value="UniProtKB-UniRule"/>
</dbReference>
<dbReference type="GO" id="GO:0006284">
    <property type="term" value="P:base-excision repair"/>
    <property type="evidence" value="ECO:0007669"/>
    <property type="project" value="InterPro"/>
</dbReference>
<dbReference type="CDD" id="cd08966">
    <property type="entry name" value="EcFpg-like_N"/>
    <property type="match status" value="1"/>
</dbReference>
<dbReference type="FunFam" id="1.10.8.50:FF:000003">
    <property type="entry name" value="Formamidopyrimidine-DNA glycosylase"/>
    <property type="match status" value="1"/>
</dbReference>
<dbReference type="Gene3D" id="1.10.8.50">
    <property type="match status" value="1"/>
</dbReference>
<dbReference type="Gene3D" id="3.20.190.10">
    <property type="entry name" value="MutM-like, N-terminal"/>
    <property type="match status" value="1"/>
</dbReference>
<dbReference type="HAMAP" id="MF_00103">
    <property type="entry name" value="Fapy_DNA_glycosyl"/>
    <property type="match status" value="1"/>
</dbReference>
<dbReference type="InterPro" id="IPR015886">
    <property type="entry name" value="DNA_glyclase/AP_lyase_DNA-bd"/>
</dbReference>
<dbReference type="InterPro" id="IPR015887">
    <property type="entry name" value="DNA_glyclase_Znf_dom_DNA_BS"/>
</dbReference>
<dbReference type="InterPro" id="IPR020629">
    <property type="entry name" value="Formamido-pyr_DNA_Glyclase"/>
</dbReference>
<dbReference type="InterPro" id="IPR012319">
    <property type="entry name" value="FPG_cat"/>
</dbReference>
<dbReference type="InterPro" id="IPR035937">
    <property type="entry name" value="MutM-like_N-ter"/>
</dbReference>
<dbReference type="InterPro" id="IPR010979">
    <property type="entry name" value="Ribosomal_uS13-like_H2TH"/>
</dbReference>
<dbReference type="InterPro" id="IPR000214">
    <property type="entry name" value="Znf_DNA_glyclase/AP_lyase"/>
</dbReference>
<dbReference type="InterPro" id="IPR010663">
    <property type="entry name" value="Znf_FPG/IleRS"/>
</dbReference>
<dbReference type="NCBIfam" id="TIGR00577">
    <property type="entry name" value="fpg"/>
    <property type="match status" value="1"/>
</dbReference>
<dbReference type="NCBIfam" id="NF002211">
    <property type="entry name" value="PRK01103.1"/>
    <property type="match status" value="1"/>
</dbReference>
<dbReference type="NCBIfam" id="NF010551">
    <property type="entry name" value="PRK13945.1"/>
    <property type="match status" value="1"/>
</dbReference>
<dbReference type="PANTHER" id="PTHR22993">
    <property type="entry name" value="FORMAMIDOPYRIMIDINE-DNA GLYCOSYLASE"/>
    <property type="match status" value="1"/>
</dbReference>
<dbReference type="PANTHER" id="PTHR22993:SF9">
    <property type="entry name" value="FORMAMIDOPYRIMIDINE-DNA GLYCOSYLASE"/>
    <property type="match status" value="1"/>
</dbReference>
<dbReference type="Pfam" id="PF01149">
    <property type="entry name" value="Fapy_DNA_glyco"/>
    <property type="match status" value="1"/>
</dbReference>
<dbReference type="Pfam" id="PF06831">
    <property type="entry name" value="H2TH"/>
    <property type="match status" value="1"/>
</dbReference>
<dbReference type="Pfam" id="PF06827">
    <property type="entry name" value="zf-FPG_IleRS"/>
    <property type="match status" value="1"/>
</dbReference>
<dbReference type="SMART" id="SM00898">
    <property type="entry name" value="Fapy_DNA_glyco"/>
    <property type="match status" value="1"/>
</dbReference>
<dbReference type="SMART" id="SM01232">
    <property type="entry name" value="H2TH"/>
    <property type="match status" value="1"/>
</dbReference>
<dbReference type="SUPFAM" id="SSF57716">
    <property type="entry name" value="Glucocorticoid receptor-like (DNA-binding domain)"/>
    <property type="match status" value="1"/>
</dbReference>
<dbReference type="SUPFAM" id="SSF81624">
    <property type="entry name" value="N-terminal domain of MutM-like DNA repair proteins"/>
    <property type="match status" value="1"/>
</dbReference>
<dbReference type="SUPFAM" id="SSF46946">
    <property type="entry name" value="S13-like H2TH domain"/>
    <property type="match status" value="1"/>
</dbReference>
<dbReference type="PROSITE" id="PS51068">
    <property type="entry name" value="FPG_CAT"/>
    <property type="match status" value="1"/>
</dbReference>
<dbReference type="PROSITE" id="PS01242">
    <property type="entry name" value="ZF_FPG_1"/>
    <property type="match status" value="1"/>
</dbReference>
<dbReference type="PROSITE" id="PS51066">
    <property type="entry name" value="ZF_FPG_2"/>
    <property type="match status" value="1"/>
</dbReference>